<dbReference type="EMBL" id="X07104">
    <property type="protein sequence ID" value="CAA30125.1"/>
    <property type="molecule type" value="mRNA"/>
</dbReference>
<dbReference type="EMBL" id="M26883">
    <property type="protein sequence ID" value="AAA49755.1"/>
    <property type="molecule type" value="Genomic_DNA"/>
</dbReference>
<dbReference type="PIR" id="S00592">
    <property type="entry name" value="S00592"/>
</dbReference>
<dbReference type="SMR" id="P09019"/>
<dbReference type="AGR" id="Xenbase:XB-GENE-6252645"/>
<dbReference type="Xenbase" id="XB-GENE-6252645">
    <property type="gene designation" value="hoxb5.S"/>
</dbReference>
<dbReference type="Proteomes" id="UP000186698">
    <property type="component" value="Unplaced"/>
</dbReference>
<dbReference type="GO" id="GO:0005654">
    <property type="term" value="C:nucleoplasm"/>
    <property type="evidence" value="ECO:0000318"/>
    <property type="project" value="GO_Central"/>
</dbReference>
<dbReference type="GO" id="GO:0000981">
    <property type="term" value="F:DNA-binding transcription factor activity, RNA polymerase II-specific"/>
    <property type="evidence" value="ECO:0000318"/>
    <property type="project" value="GO_Central"/>
</dbReference>
<dbReference type="GO" id="GO:0000978">
    <property type="term" value="F:RNA polymerase II cis-regulatory region sequence-specific DNA binding"/>
    <property type="evidence" value="ECO:0000318"/>
    <property type="project" value="GO_Central"/>
</dbReference>
<dbReference type="GO" id="GO:0009952">
    <property type="term" value="P:anterior/posterior pattern specification"/>
    <property type="evidence" value="ECO:0000318"/>
    <property type="project" value="GO_Central"/>
</dbReference>
<dbReference type="GO" id="GO:0048704">
    <property type="term" value="P:embryonic skeletal system morphogenesis"/>
    <property type="evidence" value="ECO:0000318"/>
    <property type="project" value="GO_Central"/>
</dbReference>
<dbReference type="GO" id="GO:0045944">
    <property type="term" value="P:positive regulation of transcription by RNA polymerase II"/>
    <property type="evidence" value="ECO:0000318"/>
    <property type="project" value="GO_Central"/>
</dbReference>
<dbReference type="CDD" id="cd00086">
    <property type="entry name" value="homeodomain"/>
    <property type="match status" value="1"/>
</dbReference>
<dbReference type="FunFam" id="1.10.10.60:FF:000055">
    <property type="entry name" value="Homeobox protein Hox-A5"/>
    <property type="match status" value="1"/>
</dbReference>
<dbReference type="Gene3D" id="1.10.10.60">
    <property type="entry name" value="Homeodomain-like"/>
    <property type="match status" value="1"/>
</dbReference>
<dbReference type="InterPro" id="IPR050609">
    <property type="entry name" value="Antp_homeobox_Deformed_sf"/>
</dbReference>
<dbReference type="InterPro" id="IPR001356">
    <property type="entry name" value="HD"/>
</dbReference>
<dbReference type="InterPro" id="IPR020479">
    <property type="entry name" value="HD_metazoa"/>
</dbReference>
<dbReference type="InterPro" id="IPR017995">
    <property type="entry name" value="Homeobox_antennapedia"/>
</dbReference>
<dbReference type="InterPro" id="IPR001827">
    <property type="entry name" value="Homeobox_Antennapedia_CS"/>
</dbReference>
<dbReference type="InterPro" id="IPR017970">
    <property type="entry name" value="Homeobox_CS"/>
</dbReference>
<dbReference type="InterPro" id="IPR009057">
    <property type="entry name" value="Homeodomain-like_sf"/>
</dbReference>
<dbReference type="PANTHER" id="PTHR45771:SF13">
    <property type="entry name" value="HOMEOBOX C5"/>
    <property type="match status" value="1"/>
</dbReference>
<dbReference type="PANTHER" id="PTHR45771">
    <property type="entry name" value="HOMEOTIC PROTEIN DEFORMED"/>
    <property type="match status" value="1"/>
</dbReference>
<dbReference type="Pfam" id="PF00046">
    <property type="entry name" value="Homeodomain"/>
    <property type="match status" value="1"/>
</dbReference>
<dbReference type="PRINTS" id="PR00025">
    <property type="entry name" value="ANTENNAPEDIA"/>
</dbReference>
<dbReference type="PRINTS" id="PR00024">
    <property type="entry name" value="HOMEOBOX"/>
</dbReference>
<dbReference type="SMART" id="SM00389">
    <property type="entry name" value="HOX"/>
    <property type="match status" value="1"/>
</dbReference>
<dbReference type="SUPFAM" id="SSF46689">
    <property type="entry name" value="Homeodomain-like"/>
    <property type="match status" value="1"/>
</dbReference>
<dbReference type="PROSITE" id="PS00032">
    <property type="entry name" value="ANTENNAPEDIA"/>
    <property type="match status" value="1"/>
</dbReference>
<dbReference type="PROSITE" id="PS00027">
    <property type="entry name" value="HOMEOBOX_1"/>
    <property type="match status" value="1"/>
</dbReference>
<dbReference type="PROSITE" id="PS50071">
    <property type="entry name" value="HOMEOBOX_2"/>
    <property type="match status" value="1"/>
</dbReference>
<reference key="1">
    <citation type="journal article" date="1988" name="Nucleic Acids Res.">
        <title>Xenopus homeobox-containing cDNAs expressed in early development.</title>
        <authorList>
            <person name="Fritz A."/>
            <person name="De Robertis E.M."/>
        </authorList>
    </citation>
    <scope>NUCLEOTIDE SEQUENCE [MRNA]</scope>
</reference>
<reference key="2">
    <citation type="journal article" date="1986" name="EMBO J.">
        <title>Embryonic expression and nuclear localization of Xenopus homeobox (Xhox) gene products.</title>
        <authorList>
            <person name="Harvey R.P."/>
            <person name="Tabin C.J."/>
            <person name="Melton D.A."/>
        </authorList>
    </citation>
    <scope>NUCLEOTIDE SEQUENCE [GENOMIC DNA] OF 155-214</scope>
</reference>
<proteinExistence type="evidence at transcript level"/>
<evidence type="ECO:0000255" key="1">
    <source>
        <dbReference type="PROSITE-ProRule" id="PRU00108"/>
    </source>
</evidence>
<evidence type="ECO:0000256" key="2">
    <source>
        <dbReference type="SAM" id="MobiDB-lite"/>
    </source>
</evidence>
<evidence type="ECO:0000305" key="3"/>
<feature type="chain" id="PRO_0000200134" description="Homeobox protein Hox-B5">
    <location>
        <begin position="1" status="less than"/>
        <end position="230"/>
    </location>
</feature>
<feature type="DNA-binding region" description="Homeobox" evidence="1">
    <location>
        <begin position="155"/>
        <end position="214"/>
    </location>
</feature>
<feature type="region of interest" description="Disordered" evidence="2">
    <location>
        <begin position="1"/>
        <end position="135"/>
    </location>
</feature>
<feature type="short sequence motif" description="Antp-type hexapeptide">
    <location>
        <begin position="137"/>
        <end position="142"/>
    </location>
</feature>
<feature type="compositionally biased region" description="Polar residues" evidence="2">
    <location>
        <begin position="49"/>
        <end position="65"/>
    </location>
</feature>
<feature type="compositionally biased region" description="Low complexity" evidence="2">
    <location>
        <begin position="87"/>
        <end position="103"/>
    </location>
</feature>
<feature type="non-terminal residue">
    <location>
        <position position="1"/>
    </location>
</feature>
<gene>
    <name type="primary">hoxb5</name>
</gene>
<sequence length="230" mass="25276">GGGGGNVSGSYREAGGNMQPGAYGSYNYTGMDLSISRTAAPTYGGDNSFPGQESSRFRANQNCPLSTPDPLPCAKSQKSELSPADPATSSAHFTETEETSASSETDESTPRSGAPPRALQDNCSPGAAGTDGQSPQIFPWMRKLHINHDMAGPDGKRARTAYTRYQTLELEKEFHFNRYLTRRRRIEIAHTLCLSERQIKIWFQNRRMKWKKDNKLKSMSLATGSSAFQP</sequence>
<name>HXB5_XENLA</name>
<protein>
    <recommendedName>
        <fullName>Homeobox protein Hox-B5</fullName>
    </recommendedName>
    <alternativeName>
        <fullName>Xhox-1B</fullName>
    </alternativeName>
    <alternativeName>
        <fullName>XlHbox-4</fullName>
    </alternativeName>
</protein>
<keyword id="KW-0217">Developmental protein</keyword>
<keyword id="KW-0238">DNA-binding</keyword>
<keyword id="KW-0371">Homeobox</keyword>
<keyword id="KW-0539">Nucleus</keyword>
<keyword id="KW-1185">Reference proteome</keyword>
<keyword id="KW-0804">Transcription</keyword>
<keyword id="KW-0805">Transcription regulation</keyword>
<comment type="function">
    <text>Sequence-specific transcription factor which is part of a developmental regulatory system that provides cells with specific positional identities on the anterior-posterior axis.</text>
</comment>
<comment type="subcellular location">
    <subcellularLocation>
        <location>Nucleus</location>
    </subcellularLocation>
</comment>
<comment type="developmental stage">
    <text>Embryo.</text>
</comment>
<comment type="similarity">
    <text evidence="3">Belongs to the Antp homeobox family.</text>
</comment>
<accession>P09019</accession>
<organism>
    <name type="scientific">Xenopus laevis</name>
    <name type="common">African clawed frog</name>
    <dbReference type="NCBI Taxonomy" id="8355"/>
    <lineage>
        <taxon>Eukaryota</taxon>
        <taxon>Metazoa</taxon>
        <taxon>Chordata</taxon>
        <taxon>Craniata</taxon>
        <taxon>Vertebrata</taxon>
        <taxon>Euteleostomi</taxon>
        <taxon>Amphibia</taxon>
        <taxon>Batrachia</taxon>
        <taxon>Anura</taxon>
        <taxon>Pipoidea</taxon>
        <taxon>Pipidae</taxon>
        <taxon>Xenopodinae</taxon>
        <taxon>Xenopus</taxon>
        <taxon>Xenopus</taxon>
    </lineage>
</organism>